<dbReference type="EC" id="1.8.1.2" evidence="1"/>
<dbReference type="EMBL" id="CP000681">
    <property type="protein sequence ID" value="ABP76776.1"/>
    <property type="molecule type" value="Genomic_DNA"/>
</dbReference>
<dbReference type="SMR" id="A4Y9Z3"/>
<dbReference type="STRING" id="319224.Sputcn32_3063"/>
<dbReference type="KEGG" id="spc:Sputcn32_3063"/>
<dbReference type="eggNOG" id="COG0155">
    <property type="taxonomic scope" value="Bacteria"/>
</dbReference>
<dbReference type="HOGENOM" id="CLU_001975_3_2_6"/>
<dbReference type="UniPathway" id="UPA00140">
    <property type="reaction ID" value="UER00207"/>
</dbReference>
<dbReference type="GO" id="GO:0009337">
    <property type="term" value="C:sulfite reductase complex (NADPH)"/>
    <property type="evidence" value="ECO:0007669"/>
    <property type="project" value="InterPro"/>
</dbReference>
<dbReference type="GO" id="GO:0051539">
    <property type="term" value="F:4 iron, 4 sulfur cluster binding"/>
    <property type="evidence" value="ECO:0007669"/>
    <property type="project" value="UniProtKB-KW"/>
</dbReference>
<dbReference type="GO" id="GO:0020037">
    <property type="term" value="F:heme binding"/>
    <property type="evidence" value="ECO:0007669"/>
    <property type="project" value="InterPro"/>
</dbReference>
<dbReference type="GO" id="GO:0046872">
    <property type="term" value="F:metal ion binding"/>
    <property type="evidence" value="ECO:0007669"/>
    <property type="project" value="UniProtKB-KW"/>
</dbReference>
<dbReference type="GO" id="GO:0050661">
    <property type="term" value="F:NADP binding"/>
    <property type="evidence" value="ECO:0007669"/>
    <property type="project" value="InterPro"/>
</dbReference>
<dbReference type="GO" id="GO:0050311">
    <property type="term" value="F:sulfite reductase (ferredoxin) activity"/>
    <property type="evidence" value="ECO:0007669"/>
    <property type="project" value="TreeGrafter"/>
</dbReference>
<dbReference type="GO" id="GO:0004783">
    <property type="term" value="F:sulfite reductase (NADPH) activity"/>
    <property type="evidence" value="ECO:0007669"/>
    <property type="project" value="UniProtKB-UniRule"/>
</dbReference>
<dbReference type="GO" id="GO:0019344">
    <property type="term" value="P:cysteine biosynthetic process"/>
    <property type="evidence" value="ECO:0007669"/>
    <property type="project" value="UniProtKB-KW"/>
</dbReference>
<dbReference type="GO" id="GO:0070814">
    <property type="term" value="P:hydrogen sulfide biosynthetic process"/>
    <property type="evidence" value="ECO:0007669"/>
    <property type="project" value="UniProtKB-UniRule"/>
</dbReference>
<dbReference type="GO" id="GO:0000103">
    <property type="term" value="P:sulfate assimilation"/>
    <property type="evidence" value="ECO:0007669"/>
    <property type="project" value="UniProtKB-UniRule"/>
</dbReference>
<dbReference type="FunFam" id="3.30.413.10:FF:000003">
    <property type="entry name" value="Sulfite reductase [NADPH] hemoprotein beta-component"/>
    <property type="match status" value="1"/>
</dbReference>
<dbReference type="FunFam" id="3.30.413.10:FF:000004">
    <property type="entry name" value="Sulfite reductase [NADPH] hemoprotein beta-component"/>
    <property type="match status" value="1"/>
</dbReference>
<dbReference type="Gene3D" id="3.30.413.10">
    <property type="entry name" value="Sulfite Reductase Hemoprotein, domain 1"/>
    <property type="match status" value="2"/>
</dbReference>
<dbReference type="HAMAP" id="MF_01540">
    <property type="entry name" value="CysI"/>
    <property type="match status" value="1"/>
</dbReference>
<dbReference type="InterPro" id="IPR011786">
    <property type="entry name" value="CysI"/>
</dbReference>
<dbReference type="InterPro" id="IPR005117">
    <property type="entry name" value="NiRdtase/SiRdtase_haem-b_fer"/>
</dbReference>
<dbReference type="InterPro" id="IPR036136">
    <property type="entry name" value="Nit/Sulf_reduc_fer-like_dom_sf"/>
</dbReference>
<dbReference type="InterPro" id="IPR006067">
    <property type="entry name" value="NO2/SO3_Rdtase_4Fe4S_dom"/>
</dbReference>
<dbReference type="InterPro" id="IPR045169">
    <property type="entry name" value="NO2/SO3_Rdtase_4Fe4S_prot"/>
</dbReference>
<dbReference type="InterPro" id="IPR045854">
    <property type="entry name" value="NO2/SO3_Rdtase_4Fe4S_sf"/>
</dbReference>
<dbReference type="InterPro" id="IPR006066">
    <property type="entry name" value="NO2/SO3_Rdtase_FeS/sirohaem_BS"/>
</dbReference>
<dbReference type="NCBIfam" id="TIGR02041">
    <property type="entry name" value="CysI"/>
    <property type="match status" value="1"/>
</dbReference>
<dbReference type="NCBIfam" id="NF010029">
    <property type="entry name" value="PRK13504.1"/>
    <property type="match status" value="1"/>
</dbReference>
<dbReference type="PANTHER" id="PTHR11493:SF47">
    <property type="entry name" value="SULFITE REDUCTASE [NADPH] SUBUNIT BETA"/>
    <property type="match status" value="1"/>
</dbReference>
<dbReference type="PANTHER" id="PTHR11493">
    <property type="entry name" value="SULFITE REDUCTASE [NADPH] SUBUNIT BETA-RELATED"/>
    <property type="match status" value="1"/>
</dbReference>
<dbReference type="Pfam" id="PF01077">
    <property type="entry name" value="NIR_SIR"/>
    <property type="match status" value="1"/>
</dbReference>
<dbReference type="Pfam" id="PF03460">
    <property type="entry name" value="NIR_SIR_ferr"/>
    <property type="match status" value="2"/>
</dbReference>
<dbReference type="PRINTS" id="PR00397">
    <property type="entry name" value="SIROHAEM"/>
</dbReference>
<dbReference type="SUPFAM" id="SSF56014">
    <property type="entry name" value="Nitrite and sulphite reductase 4Fe-4S domain-like"/>
    <property type="match status" value="2"/>
</dbReference>
<dbReference type="SUPFAM" id="SSF55124">
    <property type="entry name" value="Nitrite/Sulfite reductase N-terminal domain-like"/>
    <property type="match status" value="2"/>
</dbReference>
<dbReference type="PROSITE" id="PS00365">
    <property type="entry name" value="NIR_SIR"/>
    <property type="match status" value="1"/>
</dbReference>
<reference key="1">
    <citation type="submission" date="2007-04" db="EMBL/GenBank/DDBJ databases">
        <title>Complete sequence of Shewanella putrefaciens CN-32.</title>
        <authorList>
            <consortium name="US DOE Joint Genome Institute"/>
            <person name="Copeland A."/>
            <person name="Lucas S."/>
            <person name="Lapidus A."/>
            <person name="Barry K."/>
            <person name="Detter J.C."/>
            <person name="Glavina del Rio T."/>
            <person name="Hammon N."/>
            <person name="Israni S."/>
            <person name="Dalin E."/>
            <person name="Tice H."/>
            <person name="Pitluck S."/>
            <person name="Chain P."/>
            <person name="Malfatti S."/>
            <person name="Shin M."/>
            <person name="Vergez L."/>
            <person name="Schmutz J."/>
            <person name="Larimer F."/>
            <person name="Land M."/>
            <person name="Hauser L."/>
            <person name="Kyrpides N."/>
            <person name="Mikhailova N."/>
            <person name="Romine M.F."/>
            <person name="Fredrickson J."/>
            <person name="Tiedje J."/>
            <person name="Richardson P."/>
        </authorList>
    </citation>
    <scope>NUCLEOTIDE SEQUENCE [LARGE SCALE GENOMIC DNA]</scope>
    <source>
        <strain>CN-32 / ATCC BAA-453</strain>
    </source>
</reference>
<organism>
    <name type="scientific">Shewanella putrefaciens (strain CN-32 / ATCC BAA-453)</name>
    <dbReference type="NCBI Taxonomy" id="319224"/>
    <lineage>
        <taxon>Bacteria</taxon>
        <taxon>Pseudomonadati</taxon>
        <taxon>Pseudomonadota</taxon>
        <taxon>Gammaproteobacteria</taxon>
        <taxon>Alteromonadales</taxon>
        <taxon>Shewanellaceae</taxon>
        <taxon>Shewanella</taxon>
    </lineage>
</organism>
<comment type="function">
    <text evidence="1">Component of the sulfite reductase complex that catalyzes the 6-electron reduction of sulfite to sulfide. This is one of several activities required for the biosynthesis of L-cysteine from sulfate.</text>
</comment>
<comment type="catalytic activity">
    <reaction evidence="1">
        <text>hydrogen sulfide + 3 NADP(+) + 3 H2O = sulfite + 3 NADPH + 4 H(+)</text>
        <dbReference type="Rhea" id="RHEA:13801"/>
        <dbReference type="ChEBI" id="CHEBI:15377"/>
        <dbReference type="ChEBI" id="CHEBI:15378"/>
        <dbReference type="ChEBI" id="CHEBI:17359"/>
        <dbReference type="ChEBI" id="CHEBI:29919"/>
        <dbReference type="ChEBI" id="CHEBI:57783"/>
        <dbReference type="ChEBI" id="CHEBI:58349"/>
        <dbReference type="EC" id="1.8.1.2"/>
    </reaction>
</comment>
<comment type="cofactor">
    <cofactor evidence="1">
        <name>siroheme</name>
        <dbReference type="ChEBI" id="CHEBI:60052"/>
    </cofactor>
    <text evidence="1">Binds 1 siroheme per subunit.</text>
</comment>
<comment type="cofactor">
    <cofactor evidence="1">
        <name>[4Fe-4S] cluster</name>
        <dbReference type="ChEBI" id="CHEBI:49883"/>
    </cofactor>
    <text evidence="1">Binds 1 [4Fe-4S] cluster per subunit.</text>
</comment>
<comment type="pathway">
    <text evidence="1">Sulfur metabolism; hydrogen sulfide biosynthesis; hydrogen sulfide from sulfite (NADPH route): step 1/1.</text>
</comment>
<comment type="subunit">
    <text evidence="1">Alpha(8)-beta(8). The alpha component is a flavoprotein, the beta component is a hemoprotein.</text>
</comment>
<comment type="similarity">
    <text evidence="1">Belongs to the nitrite and sulfite reductase 4Fe-4S domain family.</text>
</comment>
<evidence type="ECO:0000255" key="1">
    <source>
        <dbReference type="HAMAP-Rule" id="MF_01540"/>
    </source>
</evidence>
<name>CYSI_SHEPC</name>
<protein>
    <recommendedName>
        <fullName evidence="1">Sulfite reductase [NADPH] hemoprotein beta-component</fullName>
        <shortName evidence="1">SiR-HP</shortName>
        <shortName evidence="1">SiRHP</shortName>
        <ecNumber evidence="1">1.8.1.2</ecNumber>
    </recommendedName>
</protein>
<accession>A4Y9Z3</accession>
<sequence length="565" mass="62996">MSEQKLALNEYLKTDSDYLRGTIKEGLDSSVTGSFSDGDQQLIKFHGFYQQDDRDLRNERKEQKLEPLYSFMLRARVPGGICSPQQWLGVDKIASTLTSSNSIRLTTRQTFQYHGIPKRNLKTIIQDLDRQALDSIAACGDVNRNVMCNPNPVESKLHEQAYAVAKKLSDHLLPHTRAYAEIWLDEEKLLTTEDETVEPVYGKTYLPRKFKMAVAVPPDNDVDVYTNDLGFIAVAENGELVGFNLTAGGGMGSTHGEVETFPRLADDFGFIKTEDVMKFAEAVMTVQRDWGNRSNRKRSRLKYTIVDHGYEKFKAEVEARAGVKFEPKREVVIGDRGDRYGWVEGVDGKWHLTLFIESGRIKDLPGQTLQTGLREIAKIHKGDFRMTSNQNMIIAGVAAEDKATIEGLARKHGLLGQVLTQTRGHSIACVALPTCPLAMAEAERYFPEFIDHIDALQAKHGISEQAIVVRMTGCPNGCARPFAAEIGLVGKAPGRYNLYLGASFEGTRLNKMHRENIQEADILAELDTLFGRYAVERDAGETFGNFTVRVGVVKAVIDAAKDFHG</sequence>
<gene>
    <name evidence="1" type="primary">cysI</name>
    <name type="ordered locus">Sputcn32_3063</name>
</gene>
<feature type="chain" id="PRO_1000068770" description="Sulfite reductase [NADPH] hemoprotein beta-component">
    <location>
        <begin position="1"/>
        <end position="565"/>
    </location>
</feature>
<feature type="binding site" evidence="1">
    <location>
        <position position="429"/>
    </location>
    <ligand>
        <name>[4Fe-4S] cluster</name>
        <dbReference type="ChEBI" id="CHEBI:49883"/>
    </ligand>
</feature>
<feature type="binding site" evidence="1">
    <location>
        <position position="435"/>
    </location>
    <ligand>
        <name>[4Fe-4S] cluster</name>
        <dbReference type="ChEBI" id="CHEBI:49883"/>
    </ligand>
</feature>
<feature type="binding site" evidence="1">
    <location>
        <position position="474"/>
    </location>
    <ligand>
        <name>[4Fe-4S] cluster</name>
        <dbReference type="ChEBI" id="CHEBI:49883"/>
    </ligand>
</feature>
<feature type="binding site" evidence="1">
    <location>
        <position position="478"/>
    </location>
    <ligand>
        <name>[4Fe-4S] cluster</name>
        <dbReference type="ChEBI" id="CHEBI:49883"/>
    </ligand>
</feature>
<feature type="binding site" description="axial binding residue" evidence="1">
    <location>
        <position position="478"/>
    </location>
    <ligand>
        <name>siroheme</name>
        <dbReference type="ChEBI" id="CHEBI:60052"/>
    </ligand>
    <ligandPart>
        <name>Fe</name>
        <dbReference type="ChEBI" id="CHEBI:18248"/>
    </ligandPart>
</feature>
<keyword id="KW-0004">4Fe-4S</keyword>
<keyword id="KW-0028">Amino-acid biosynthesis</keyword>
<keyword id="KW-0198">Cysteine biosynthesis</keyword>
<keyword id="KW-0349">Heme</keyword>
<keyword id="KW-0408">Iron</keyword>
<keyword id="KW-0411">Iron-sulfur</keyword>
<keyword id="KW-0479">Metal-binding</keyword>
<keyword id="KW-0521">NADP</keyword>
<keyword id="KW-0560">Oxidoreductase</keyword>
<proteinExistence type="inferred from homology"/>